<sequence length="216" mass="23341">MSITAAQVNELRKATGAGLMDCKKALTETGGDHEQAVDYLRKKGLAAASKKSGRVATEGLVGSYIHAGGKIGVLVEVNCETDFVAKNENFQAFVKDIAMHIAAASPLYVRREEVDPDVLEREKAIYRAKAKESGKPDNIVEKIIEGQVNKFYADICLLEQPFVKDSDKTVQTYLNETIAAIGENISIRRFAKFTLGEGLAKKESDFAAEVAAAAGV</sequence>
<accession>A5G7W7</accession>
<name>EFTS_GEOUR</name>
<gene>
    <name evidence="1" type="primary">tsf</name>
    <name type="ordered locus">Gura_3732</name>
</gene>
<feature type="chain" id="PRO_1000074865" description="Elongation factor Ts">
    <location>
        <begin position="1"/>
        <end position="216"/>
    </location>
</feature>
<feature type="region of interest" description="Involved in Mg(2+) ion dislocation from EF-Tu" evidence="1">
    <location>
        <begin position="81"/>
        <end position="84"/>
    </location>
</feature>
<comment type="function">
    <text evidence="1">Associates with the EF-Tu.GDP complex and induces the exchange of GDP to GTP. It remains bound to the aminoacyl-tRNA.EF-Tu.GTP complex up to the GTP hydrolysis stage on the ribosome.</text>
</comment>
<comment type="subcellular location">
    <subcellularLocation>
        <location evidence="1">Cytoplasm</location>
    </subcellularLocation>
</comment>
<comment type="similarity">
    <text evidence="1">Belongs to the EF-Ts family.</text>
</comment>
<reference key="1">
    <citation type="submission" date="2007-05" db="EMBL/GenBank/DDBJ databases">
        <title>Complete sequence of Geobacter uraniireducens Rf4.</title>
        <authorList>
            <consortium name="US DOE Joint Genome Institute"/>
            <person name="Copeland A."/>
            <person name="Lucas S."/>
            <person name="Lapidus A."/>
            <person name="Barry K."/>
            <person name="Detter J.C."/>
            <person name="Glavina del Rio T."/>
            <person name="Hammon N."/>
            <person name="Israni S."/>
            <person name="Dalin E."/>
            <person name="Tice H."/>
            <person name="Pitluck S."/>
            <person name="Chertkov O."/>
            <person name="Brettin T."/>
            <person name="Bruce D."/>
            <person name="Han C."/>
            <person name="Schmutz J."/>
            <person name="Larimer F."/>
            <person name="Land M."/>
            <person name="Hauser L."/>
            <person name="Kyrpides N."/>
            <person name="Mikhailova N."/>
            <person name="Shelobolina E."/>
            <person name="Aklujkar M."/>
            <person name="Lovley D."/>
            <person name="Richardson P."/>
        </authorList>
    </citation>
    <scope>NUCLEOTIDE SEQUENCE [LARGE SCALE GENOMIC DNA]</scope>
    <source>
        <strain>ATCC BAA-1134 / JCM 13001 / Rf4</strain>
    </source>
</reference>
<evidence type="ECO:0000255" key="1">
    <source>
        <dbReference type="HAMAP-Rule" id="MF_00050"/>
    </source>
</evidence>
<organism>
    <name type="scientific">Geotalea uraniireducens (strain Rf4)</name>
    <name type="common">Geobacter uraniireducens</name>
    <dbReference type="NCBI Taxonomy" id="351605"/>
    <lineage>
        <taxon>Bacteria</taxon>
        <taxon>Pseudomonadati</taxon>
        <taxon>Thermodesulfobacteriota</taxon>
        <taxon>Desulfuromonadia</taxon>
        <taxon>Geobacterales</taxon>
        <taxon>Geobacteraceae</taxon>
        <taxon>Geotalea</taxon>
    </lineage>
</organism>
<keyword id="KW-0963">Cytoplasm</keyword>
<keyword id="KW-0251">Elongation factor</keyword>
<keyword id="KW-0648">Protein biosynthesis</keyword>
<keyword id="KW-1185">Reference proteome</keyword>
<dbReference type="EMBL" id="CP000698">
    <property type="protein sequence ID" value="ABQ27885.1"/>
    <property type="molecule type" value="Genomic_DNA"/>
</dbReference>
<dbReference type="RefSeq" id="WP_011940536.1">
    <property type="nucleotide sequence ID" value="NC_009483.1"/>
</dbReference>
<dbReference type="SMR" id="A5G7W7"/>
<dbReference type="STRING" id="351605.Gura_3732"/>
<dbReference type="KEGG" id="gur:Gura_3732"/>
<dbReference type="HOGENOM" id="CLU_047155_1_1_7"/>
<dbReference type="OrthoDB" id="9808348at2"/>
<dbReference type="Proteomes" id="UP000006695">
    <property type="component" value="Chromosome"/>
</dbReference>
<dbReference type="GO" id="GO:0005737">
    <property type="term" value="C:cytoplasm"/>
    <property type="evidence" value="ECO:0007669"/>
    <property type="project" value="UniProtKB-SubCell"/>
</dbReference>
<dbReference type="GO" id="GO:0003746">
    <property type="term" value="F:translation elongation factor activity"/>
    <property type="evidence" value="ECO:0007669"/>
    <property type="project" value="UniProtKB-UniRule"/>
</dbReference>
<dbReference type="CDD" id="cd14275">
    <property type="entry name" value="UBA_EF-Ts"/>
    <property type="match status" value="1"/>
</dbReference>
<dbReference type="FunFam" id="1.10.286.20:FF:000001">
    <property type="entry name" value="Elongation factor Ts"/>
    <property type="match status" value="1"/>
</dbReference>
<dbReference type="FunFam" id="1.10.8.10:FF:000001">
    <property type="entry name" value="Elongation factor Ts"/>
    <property type="match status" value="1"/>
</dbReference>
<dbReference type="Gene3D" id="1.10.286.20">
    <property type="match status" value="1"/>
</dbReference>
<dbReference type="Gene3D" id="1.10.8.10">
    <property type="entry name" value="DNA helicase RuvA subunit, C-terminal domain"/>
    <property type="match status" value="1"/>
</dbReference>
<dbReference type="Gene3D" id="3.30.479.20">
    <property type="entry name" value="Elongation factor Ts, dimerisation domain"/>
    <property type="match status" value="1"/>
</dbReference>
<dbReference type="HAMAP" id="MF_00050">
    <property type="entry name" value="EF_Ts"/>
    <property type="match status" value="1"/>
</dbReference>
<dbReference type="InterPro" id="IPR036402">
    <property type="entry name" value="EF-Ts_dimer_sf"/>
</dbReference>
<dbReference type="InterPro" id="IPR001816">
    <property type="entry name" value="Transl_elong_EFTs/EF1B"/>
</dbReference>
<dbReference type="InterPro" id="IPR014039">
    <property type="entry name" value="Transl_elong_EFTs/EF1B_dimer"/>
</dbReference>
<dbReference type="InterPro" id="IPR018101">
    <property type="entry name" value="Transl_elong_Ts_CS"/>
</dbReference>
<dbReference type="InterPro" id="IPR009060">
    <property type="entry name" value="UBA-like_sf"/>
</dbReference>
<dbReference type="NCBIfam" id="TIGR00116">
    <property type="entry name" value="tsf"/>
    <property type="match status" value="2"/>
</dbReference>
<dbReference type="PANTHER" id="PTHR11741">
    <property type="entry name" value="ELONGATION FACTOR TS"/>
    <property type="match status" value="1"/>
</dbReference>
<dbReference type="PANTHER" id="PTHR11741:SF0">
    <property type="entry name" value="ELONGATION FACTOR TS, MITOCHONDRIAL"/>
    <property type="match status" value="1"/>
</dbReference>
<dbReference type="Pfam" id="PF00889">
    <property type="entry name" value="EF_TS"/>
    <property type="match status" value="1"/>
</dbReference>
<dbReference type="SUPFAM" id="SSF54713">
    <property type="entry name" value="Elongation factor Ts (EF-Ts), dimerisation domain"/>
    <property type="match status" value="1"/>
</dbReference>
<dbReference type="SUPFAM" id="SSF46934">
    <property type="entry name" value="UBA-like"/>
    <property type="match status" value="1"/>
</dbReference>
<dbReference type="PROSITE" id="PS01126">
    <property type="entry name" value="EF_TS_1"/>
    <property type="match status" value="1"/>
</dbReference>
<dbReference type="PROSITE" id="PS01127">
    <property type="entry name" value="EF_TS_2"/>
    <property type="match status" value="1"/>
</dbReference>
<proteinExistence type="inferred from homology"/>
<protein>
    <recommendedName>
        <fullName evidence="1">Elongation factor Ts</fullName>
        <shortName evidence="1">EF-Ts</shortName>
    </recommendedName>
</protein>